<comment type="function">
    <text evidence="4 6">Required for mitochondrial cytochrome c oxidase (COX) assembly and respiration. Binds copper. May be involved in copper trafficking and distribution to mitochondrial COX and SOD1.</text>
</comment>
<comment type="subunit">
    <text evidence="6">Interacts with CMC2.</text>
</comment>
<comment type="subcellular location">
    <subcellularLocation>
        <location evidence="4 5">Mitochondrion inner membrane</location>
        <topology evidence="4 5">Peripheral membrane protein</topology>
        <orientation evidence="4 5">Intermembrane side</orientation>
    </subcellularLocation>
    <subcellularLocation>
        <location evidence="7">Mitochondrion intermembrane space</location>
    </subcellularLocation>
    <text>Imported into the mitochondria via the mitochondrial MIA40-ERV1 machinery.</text>
</comment>
<comment type="domain">
    <text evidence="1">The twin Cx9C motifs are involved in the recognition by the mitochondrial MIA40-ERV1 disulfide relay system and the subsequent transfer of disulfide bonds by dithiol/disulfide exchange reactions to the newly imported protein.</text>
</comment>
<comment type="miscellaneous">
    <text evidence="3">Present with 259 molecules/cell in log phase SD medium.</text>
</comment>
<comment type="similarity">
    <text evidence="8">Belongs to the CMC family.</text>
</comment>
<comment type="sequence caution" evidence="8">
    <conflict type="frameshift">
        <sequence resource="EMBL-CDS" id="CAA81978"/>
    </conflict>
</comment>
<feature type="chain" id="PRO_0000203147" description="COX assembly mitochondrial protein">
    <location>
        <begin position="1"/>
        <end position="111"/>
    </location>
</feature>
<feature type="domain" description="CHCH" evidence="2">
    <location>
        <begin position="39"/>
        <end position="82"/>
    </location>
</feature>
<feature type="short sequence motif" description="Cx9C motif 1" evidence="2">
    <location>
        <begin position="42"/>
        <end position="52"/>
    </location>
</feature>
<feature type="short sequence motif" description="Cx9C motif 2" evidence="2">
    <location>
        <begin position="64"/>
        <end position="74"/>
    </location>
</feature>
<feature type="disulfide bond" evidence="2">
    <location>
        <begin position="42"/>
        <end position="74"/>
    </location>
</feature>
<feature type="disulfide bond" evidence="2">
    <location>
        <begin position="52"/>
        <end position="64"/>
    </location>
</feature>
<keyword id="KW-0143">Chaperone</keyword>
<keyword id="KW-0186">Copper</keyword>
<keyword id="KW-1015">Disulfide bond</keyword>
<keyword id="KW-0472">Membrane</keyword>
<keyword id="KW-0479">Metal-binding</keyword>
<keyword id="KW-0496">Mitochondrion</keyword>
<keyword id="KW-0999">Mitochondrion inner membrane</keyword>
<keyword id="KW-1185">Reference proteome</keyword>
<keyword id="KW-0677">Repeat</keyword>
<gene>
    <name type="primary">CMC1</name>
    <name type="ordered locus">YKL137W</name>
</gene>
<sequence>MEQNKDPQMISKHSSRLPIWVLSPREEQQARKNLKTETYKKCANFVQAMADCAKANGMKVFPTCDKQRDEMKSCLLFYQTDEKYLDGERDKIVLEKINKLEKLCQKQSSTK</sequence>
<evidence type="ECO:0000250" key="1"/>
<evidence type="ECO:0000255" key="2">
    <source>
        <dbReference type="PROSITE-ProRule" id="PRU01150"/>
    </source>
</evidence>
<evidence type="ECO:0000269" key="3">
    <source>
    </source>
</evidence>
<evidence type="ECO:0000269" key="4">
    <source>
    </source>
</evidence>
<evidence type="ECO:0000269" key="5">
    <source>
    </source>
</evidence>
<evidence type="ECO:0000269" key="6">
    <source>
    </source>
</evidence>
<evidence type="ECO:0000269" key="7">
    <source>
    </source>
</evidence>
<evidence type="ECO:0000305" key="8"/>
<accession>P36064</accession>
<accession>D6VX60</accession>
<protein>
    <recommendedName>
        <fullName>COX assembly mitochondrial protein</fullName>
    </recommendedName>
    <alternativeName>
        <fullName>COX biogenesis factor CMC1</fullName>
    </alternativeName>
    <alternativeName>
        <fullName>Cx9C mitochondrial COX assembly protein 1</fullName>
    </alternativeName>
    <alternativeName>
        <fullName>Mitochondrial metallochaperone-like protein CMC1</fullName>
    </alternativeName>
</protein>
<reference key="1">
    <citation type="journal article" date="1994" name="Nature">
        <title>Complete DNA sequence of yeast chromosome XI.</title>
        <authorList>
            <person name="Dujon B."/>
            <person name="Alexandraki D."/>
            <person name="Andre B."/>
            <person name="Ansorge W."/>
            <person name="Baladron V."/>
            <person name="Ballesta J.P.G."/>
            <person name="Banrevi A."/>
            <person name="Bolle P.-A."/>
            <person name="Bolotin-Fukuhara M."/>
            <person name="Bossier P."/>
            <person name="Bou G."/>
            <person name="Boyer J."/>
            <person name="Buitrago M.J."/>
            <person name="Cheret G."/>
            <person name="Colleaux L."/>
            <person name="Daignan-Fornier B."/>
            <person name="del Rey F."/>
            <person name="Dion C."/>
            <person name="Domdey H."/>
            <person name="Duesterhoeft A."/>
            <person name="Duesterhus S."/>
            <person name="Entian K.-D."/>
            <person name="Erfle H."/>
            <person name="Esteban P.F."/>
            <person name="Feldmann H."/>
            <person name="Fernandes L."/>
            <person name="Fobo G.M."/>
            <person name="Fritz C."/>
            <person name="Fukuhara H."/>
            <person name="Gabel C."/>
            <person name="Gaillon L."/>
            <person name="Garcia-Cantalejo J.M."/>
            <person name="Garcia-Ramirez J.J."/>
            <person name="Gent M.E."/>
            <person name="Ghazvini M."/>
            <person name="Goffeau A."/>
            <person name="Gonzalez A."/>
            <person name="Grothues D."/>
            <person name="Guerreiro P."/>
            <person name="Hegemann J.H."/>
            <person name="Hewitt N."/>
            <person name="Hilger F."/>
            <person name="Hollenberg C.P."/>
            <person name="Horaitis O."/>
            <person name="Indge K.J."/>
            <person name="Jacquier A."/>
            <person name="James C.M."/>
            <person name="Jauniaux J.-C."/>
            <person name="Jimenez A."/>
            <person name="Keuchel H."/>
            <person name="Kirchrath L."/>
            <person name="Kleine K."/>
            <person name="Koetter P."/>
            <person name="Legrain P."/>
            <person name="Liebl S."/>
            <person name="Louis E.J."/>
            <person name="Maia e Silva A."/>
            <person name="Marck C."/>
            <person name="Monnier A.-L."/>
            <person name="Moestl D."/>
            <person name="Mueller S."/>
            <person name="Obermaier B."/>
            <person name="Oliver S.G."/>
            <person name="Pallier C."/>
            <person name="Pascolo S."/>
            <person name="Pfeiffer F."/>
            <person name="Philippsen P."/>
            <person name="Planta R.J."/>
            <person name="Pohl F.M."/>
            <person name="Pohl T.M."/>
            <person name="Poehlmann R."/>
            <person name="Portetelle D."/>
            <person name="Purnelle B."/>
            <person name="Puzos V."/>
            <person name="Ramezani Rad M."/>
            <person name="Rasmussen S.W."/>
            <person name="Remacha M.A."/>
            <person name="Revuelta J.L."/>
            <person name="Richard G.-F."/>
            <person name="Rieger M."/>
            <person name="Rodrigues-Pousada C."/>
            <person name="Rose M."/>
            <person name="Rupp T."/>
            <person name="Santos M.A."/>
            <person name="Schwager C."/>
            <person name="Sensen C."/>
            <person name="Skala J."/>
            <person name="Soares H."/>
            <person name="Sor F."/>
            <person name="Stegemann J."/>
            <person name="Tettelin H."/>
            <person name="Thierry A."/>
            <person name="Tzermia M."/>
            <person name="Urrestarazu L.A."/>
            <person name="van Dyck L."/>
            <person name="van Vliet-Reedijk J.C."/>
            <person name="Valens M."/>
            <person name="Vandenbol M."/>
            <person name="Vilela C."/>
            <person name="Vissers S."/>
            <person name="von Wettstein D."/>
            <person name="Voss H."/>
            <person name="Wiemann S."/>
            <person name="Xu G."/>
            <person name="Zimmermann J."/>
            <person name="Haasemann M."/>
            <person name="Becker I."/>
            <person name="Mewes H.-W."/>
        </authorList>
    </citation>
    <scope>NUCLEOTIDE SEQUENCE [LARGE SCALE GENOMIC DNA]</scope>
    <source>
        <strain>ATCC 204508 / S288c</strain>
    </source>
</reference>
<reference key="2">
    <citation type="journal article" date="2014" name="G3 (Bethesda)">
        <title>The reference genome sequence of Saccharomyces cerevisiae: Then and now.</title>
        <authorList>
            <person name="Engel S.R."/>
            <person name="Dietrich F.S."/>
            <person name="Fisk D.G."/>
            <person name="Binkley G."/>
            <person name="Balakrishnan R."/>
            <person name="Costanzo M.C."/>
            <person name="Dwight S.S."/>
            <person name="Hitz B.C."/>
            <person name="Karra K."/>
            <person name="Nash R.S."/>
            <person name="Weng S."/>
            <person name="Wong E.D."/>
            <person name="Lloyd P."/>
            <person name="Skrzypek M.S."/>
            <person name="Miyasato S.R."/>
            <person name="Simison M."/>
            <person name="Cherry J.M."/>
        </authorList>
    </citation>
    <scope>GENOME REANNOTATION</scope>
    <source>
        <strain>ATCC 204508 / S288c</strain>
    </source>
</reference>
<reference key="3">
    <citation type="journal article" date="2003" name="Nature">
        <title>Sequencing and comparison of yeast species to identify genes and regulatory elements.</title>
        <authorList>
            <person name="Kellis M."/>
            <person name="Patterson N."/>
            <person name="Endrizzi M."/>
            <person name="Birren B.W."/>
            <person name="Lander E.S."/>
        </authorList>
    </citation>
    <scope>IDENTIFICATION OF FRAMESHIFTS</scope>
</reference>
<reference key="4">
    <citation type="journal article" date="2003" name="Nature">
        <title>Global analysis of protein expression in yeast.</title>
        <authorList>
            <person name="Ghaemmaghami S."/>
            <person name="Huh W.-K."/>
            <person name="Bower K."/>
            <person name="Howson R.W."/>
            <person name="Belle A."/>
            <person name="Dephoure N."/>
            <person name="O'Shea E.K."/>
            <person name="Weissman J.S."/>
        </authorList>
    </citation>
    <scope>LEVEL OF PROTEIN EXPRESSION [LARGE SCALE ANALYSIS]</scope>
</reference>
<reference key="5">
    <citation type="journal article" date="2008" name="Mol. Cell. Biol.">
        <title>Cmc1p is a conserved mitochondrial twin CX(9)C protein involved in cytochrome c oxidase biogenesis.</title>
        <authorList>
            <person name="Horn D."/>
            <person name="Al-Ali H."/>
            <person name="Barrientos A."/>
        </authorList>
    </citation>
    <scope>FUNCTION</scope>
    <scope>SUBCELLULAR LOCATION</scope>
</reference>
<reference key="6">
    <citation type="journal article" date="2009" name="J. Mol. Biol.">
        <title>Systematic analysis of the twin cx(9)c protein family.</title>
        <authorList>
            <person name="Longen S."/>
            <person name="Bien M."/>
            <person name="Bihlmaier K."/>
            <person name="Kloeppel C."/>
            <person name="Kauff F."/>
            <person name="Hammermeister M."/>
            <person name="Westermann B."/>
            <person name="Herrmann J.M."/>
            <person name="Riemer J."/>
        </authorList>
    </citation>
    <scope>SUBCELLULAR LOCATION</scope>
</reference>
<reference key="7">
    <citation type="journal article" date="2010" name="J. Biol. Chem.">
        <title>The conserved mitochondrial twin Cx9C protein Cmc2 Is a Cmc1 homologue essential for cytochrome c oxidase biogenesis.</title>
        <authorList>
            <person name="Horn D."/>
            <person name="Zhou W."/>
            <person name="Trevisson E."/>
            <person name="Al-Ali H."/>
            <person name="Harris T.K."/>
            <person name="Salviati L."/>
            <person name="Barrientos A."/>
        </authorList>
    </citation>
    <scope>FUNCTION</scope>
    <scope>INTERACTION WITH CMC2</scope>
</reference>
<reference key="8">
    <citation type="journal article" date="2012" name="Mol. Cell. Proteomics">
        <title>Intermembrane space proteome of yeast mitochondria.</title>
        <authorList>
            <person name="Voegtle F.N."/>
            <person name="Burkhart J.M."/>
            <person name="Rao S."/>
            <person name="Gerbeth C."/>
            <person name="Hinrichs J."/>
            <person name="Martinou J.C."/>
            <person name="Chacinska A."/>
            <person name="Sickmann A."/>
            <person name="Zahedi R.P."/>
            <person name="Meisinger C."/>
        </authorList>
    </citation>
    <scope>IDENTIFICATION BY MASS SPECTROMETRY</scope>
    <scope>SUBCELLULAR LOCATION [LARGE SCALE ANALYSIS]</scope>
</reference>
<organism>
    <name type="scientific">Saccharomyces cerevisiae (strain ATCC 204508 / S288c)</name>
    <name type="common">Baker's yeast</name>
    <dbReference type="NCBI Taxonomy" id="559292"/>
    <lineage>
        <taxon>Eukaryota</taxon>
        <taxon>Fungi</taxon>
        <taxon>Dikarya</taxon>
        <taxon>Ascomycota</taxon>
        <taxon>Saccharomycotina</taxon>
        <taxon>Saccharomycetes</taxon>
        <taxon>Saccharomycetales</taxon>
        <taxon>Saccharomycetaceae</taxon>
        <taxon>Saccharomyces</taxon>
    </lineage>
</organism>
<proteinExistence type="evidence at protein level"/>
<name>COXM1_YEAST</name>
<dbReference type="EMBL" id="Z28137">
    <property type="protein sequence ID" value="CAA81978.1"/>
    <property type="status" value="ALT_FRAME"/>
    <property type="molecule type" value="Genomic_DNA"/>
</dbReference>
<dbReference type="EMBL" id="BK006944">
    <property type="protein sequence ID" value="DAA09026.1"/>
    <property type="molecule type" value="Genomic_DNA"/>
</dbReference>
<dbReference type="PIR" id="S37966">
    <property type="entry name" value="S37966"/>
</dbReference>
<dbReference type="RefSeq" id="NP_012785.2">
    <property type="nucleotide sequence ID" value="NM_001179703.1"/>
</dbReference>
<dbReference type="BioGRID" id="34000">
    <property type="interactions" value="206"/>
</dbReference>
<dbReference type="DIP" id="DIP-4543N"/>
<dbReference type="FunCoup" id="P36064">
    <property type="interactions" value="65"/>
</dbReference>
<dbReference type="IntAct" id="P36064">
    <property type="interactions" value="1"/>
</dbReference>
<dbReference type="STRING" id="4932.YKL137W"/>
<dbReference type="PaxDb" id="4932-YKL137W"/>
<dbReference type="PeptideAtlas" id="P36064"/>
<dbReference type="EnsemblFungi" id="YKL137W_mRNA">
    <property type="protein sequence ID" value="YKL137W"/>
    <property type="gene ID" value="YKL137W"/>
</dbReference>
<dbReference type="GeneID" id="853721"/>
<dbReference type="KEGG" id="sce:YKL137W"/>
<dbReference type="AGR" id="SGD:S000001620"/>
<dbReference type="SGD" id="S000001620">
    <property type="gene designation" value="CMC1"/>
</dbReference>
<dbReference type="VEuPathDB" id="FungiDB:YKL137W"/>
<dbReference type="eggNOG" id="KOG4624">
    <property type="taxonomic scope" value="Eukaryota"/>
</dbReference>
<dbReference type="HOGENOM" id="CLU_147575_0_0_1"/>
<dbReference type="InParanoid" id="P36064"/>
<dbReference type="OMA" id="WILTPKE"/>
<dbReference type="OrthoDB" id="6224010at2759"/>
<dbReference type="BioCyc" id="YEAST:G3O-31914-MONOMER"/>
<dbReference type="BioGRID-ORCS" id="853721">
    <property type="hits" value="0 hits in 10 CRISPR screens"/>
</dbReference>
<dbReference type="PRO" id="PR:P36064"/>
<dbReference type="Proteomes" id="UP000002311">
    <property type="component" value="Chromosome XI"/>
</dbReference>
<dbReference type="RNAct" id="P36064">
    <property type="molecule type" value="protein"/>
</dbReference>
<dbReference type="GO" id="GO:0005743">
    <property type="term" value="C:mitochondrial inner membrane"/>
    <property type="evidence" value="ECO:0007669"/>
    <property type="project" value="UniProtKB-SubCell"/>
</dbReference>
<dbReference type="GO" id="GO:0005758">
    <property type="term" value="C:mitochondrial intermembrane space"/>
    <property type="evidence" value="ECO:0000314"/>
    <property type="project" value="SGD"/>
</dbReference>
<dbReference type="GO" id="GO:0005739">
    <property type="term" value="C:mitochondrion"/>
    <property type="evidence" value="ECO:0007005"/>
    <property type="project" value="SGD"/>
</dbReference>
<dbReference type="GO" id="GO:0005507">
    <property type="term" value="F:copper ion binding"/>
    <property type="evidence" value="ECO:0000314"/>
    <property type="project" value="SGD"/>
</dbReference>
<dbReference type="GO" id="GO:0033617">
    <property type="term" value="P:mitochondrial cytochrome c oxidase assembly"/>
    <property type="evidence" value="ECO:0000315"/>
    <property type="project" value="SGD"/>
</dbReference>
<dbReference type="InterPro" id="IPR013892">
    <property type="entry name" value="Cyt_c_biogenesis_Cmc1-like"/>
</dbReference>
<dbReference type="Pfam" id="PF08583">
    <property type="entry name" value="Cmc1"/>
    <property type="match status" value="1"/>
</dbReference>
<dbReference type="PROSITE" id="PS51808">
    <property type="entry name" value="CHCH"/>
    <property type="match status" value="1"/>
</dbReference>